<comment type="function">
    <text evidence="2">Component of the ubiquinol-cytochrome c reductase complex (complex III or cytochrome b-c1 complex) that is part of the mitochondrial respiratory chain. The b-c1 complex mediates electron transfer from ubiquinol to cytochrome c. Contributes to the generation of a proton gradient across the mitochondrial membrane that is then used for ATP synthesis.</text>
</comment>
<comment type="cofactor">
    <cofactor evidence="2">
        <name>heme b</name>
        <dbReference type="ChEBI" id="CHEBI:60344"/>
    </cofactor>
    <text evidence="2">Binds 2 heme b groups non-covalently.</text>
</comment>
<comment type="subunit">
    <text evidence="2">The cytochrome bc1 complex contains 11 subunits: 3 respiratory subunits (MT-CYB, CYC1 and UQCRFS1), 2 core proteins (UQCRC1 and UQCRC2) and 6 low-molecular weight proteins (UQCRH/QCR6, UQCRB/QCR7, UQCRQ/QCR8, UQCR10/QCR9, UQCR11/QCR10 and a cleavage product of UQCRFS1). This cytochrome bc1 complex then forms a dimer.</text>
</comment>
<comment type="subcellular location">
    <subcellularLocation>
        <location evidence="2">Mitochondrion inner membrane</location>
        <topology evidence="2">Multi-pass membrane protein</topology>
    </subcellularLocation>
</comment>
<comment type="miscellaneous">
    <text evidence="1">Heme 1 (or BL or b562) is low-potential and absorbs at about 562 nm, and heme 2 (or BH or b566) is high-potential and absorbs at about 566 nm.</text>
</comment>
<comment type="similarity">
    <text evidence="3 4">Belongs to the cytochrome b family.</text>
</comment>
<comment type="caution">
    <text evidence="2">The full-length protein contains only eight transmembrane helices, not nine as predicted by bioinformatics tools.</text>
</comment>
<gene>
    <name type="primary">MT-CYB</name>
    <name type="synonym">COB</name>
    <name type="synonym">CYTB</name>
    <name type="synonym">MTCYB</name>
</gene>
<geneLocation type="mitochondrion"/>
<protein>
    <recommendedName>
        <fullName>Cytochrome b</fullName>
    </recommendedName>
    <alternativeName>
        <fullName>Complex III subunit 3</fullName>
    </alternativeName>
    <alternativeName>
        <fullName>Complex III subunit III</fullName>
    </alternativeName>
    <alternativeName>
        <fullName>Cytochrome b-c1 complex subunit 3</fullName>
    </alternativeName>
    <alternativeName>
        <fullName>Ubiquinol-cytochrome-c reductase complex cytochrome b subunit</fullName>
    </alternativeName>
</protein>
<evidence type="ECO:0000250" key="1"/>
<evidence type="ECO:0000250" key="2">
    <source>
        <dbReference type="UniProtKB" id="P00157"/>
    </source>
</evidence>
<evidence type="ECO:0000255" key="3">
    <source>
        <dbReference type="PROSITE-ProRule" id="PRU00967"/>
    </source>
</evidence>
<evidence type="ECO:0000255" key="4">
    <source>
        <dbReference type="PROSITE-ProRule" id="PRU00968"/>
    </source>
</evidence>
<organism>
    <name type="scientific">Bunolagus monticularis</name>
    <name type="common">Riverine rabbit</name>
    <name type="synonym">Lepus monticularis</name>
    <dbReference type="NCBI Taxonomy" id="48085"/>
    <lineage>
        <taxon>Eukaryota</taxon>
        <taxon>Metazoa</taxon>
        <taxon>Chordata</taxon>
        <taxon>Craniata</taxon>
        <taxon>Vertebrata</taxon>
        <taxon>Euteleostomi</taxon>
        <taxon>Mammalia</taxon>
        <taxon>Eutheria</taxon>
        <taxon>Euarchontoglires</taxon>
        <taxon>Glires</taxon>
        <taxon>Lagomorpha</taxon>
        <taxon>Leporidae</taxon>
        <taxon>Bunolagus</taxon>
    </lineage>
</organism>
<accession>Q6ELW6</accession>
<proteinExistence type="inferred from homology"/>
<keyword id="KW-0249">Electron transport</keyword>
<keyword id="KW-0349">Heme</keyword>
<keyword id="KW-0408">Iron</keyword>
<keyword id="KW-0472">Membrane</keyword>
<keyword id="KW-0479">Metal-binding</keyword>
<keyword id="KW-0496">Mitochondrion</keyword>
<keyword id="KW-0999">Mitochondrion inner membrane</keyword>
<keyword id="KW-0679">Respiratory chain</keyword>
<keyword id="KW-0812">Transmembrane</keyword>
<keyword id="KW-1133">Transmembrane helix</keyword>
<keyword id="KW-0813">Transport</keyword>
<keyword id="KW-0830">Ubiquinone</keyword>
<reference key="1">
    <citation type="journal article" date="2004" name="Syst. Biol.">
        <title>A molecular supermatrix of the rabbits and hares (Leporidae) allows for the identification of five intercontinental exchanges during the Miocene.</title>
        <authorList>
            <person name="Matthee C.A."/>
            <person name="van Vuuren B.J."/>
            <person name="Bell D."/>
            <person name="Robinson T.J."/>
        </authorList>
    </citation>
    <scope>NUCLEOTIDE SEQUENCE [GENOMIC DNA]</scope>
</reference>
<feature type="chain" id="PRO_0000060700" description="Cytochrome b">
    <location>
        <begin position="1"/>
        <end position="379"/>
    </location>
</feature>
<feature type="transmembrane region" description="Helical" evidence="2">
    <location>
        <begin position="33"/>
        <end position="53"/>
    </location>
</feature>
<feature type="transmembrane region" description="Helical" evidence="2">
    <location>
        <begin position="77"/>
        <end position="98"/>
    </location>
</feature>
<feature type="transmembrane region" description="Helical" evidence="2">
    <location>
        <begin position="113"/>
        <end position="133"/>
    </location>
</feature>
<feature type="transmembrane region" description="Helical" evidence="2">
    <location>
        <begin position="178"/>
        <end position="198"/>
    </location>
</feature>
<feature type="transmembrane region" description="Helical" evidence="2">
    <location>
        <begin position="226"/>
        <end position="246"/>
    </location>
</feature>
<feature type="transmembrane region" description="Helical" evidence="2">
    <location>
        <begin position="288"/>
        <end position="308"/>
    </location>
</feature>
<feature type="transmembrane region" description="Helical" evidence="2">
    <location>
        <begin position="320"/>
        <end position="340"/>
    </location>
</feature>
<feature type="transmembrane region" description="Helical" evidence="2">
    <location>
        <begin position="347"/>
        <end position="367"/>
    </location>
</feature>
<feature type="binding site" description="axial binding residue" evidence="2">
    <location>
        <position position="83"/>
    </location>
    <ligand>
        <name>heme b</name>
        <dbReference type="ChEBI" id="CHEBI:60344"/>
        <label>b562</label>
    </ligand>
    <ligandPart>
        <name>Fe</name>
        <dbReference type="ChEBI" id="CHEBI:18248"/>
    </ligandPart>
</feature>
<feature type="binding site" description="axial binding residue" evidence="2">
    <location>
        <position position="97"/>
    </location>
    <ligand>
        <name>heme b</name>
        <dbReference type="ChEBI" id="CHEBI:60344"/>
        <label>b566</label>
    </ligand>
    <ligandPart>
        <name>Fe</name>
        <dbReference type="ChEBI" id="CHEBI:18248"/>
    </ligandPart>
</feature>
<feature type="binding site" description="axial binding residue" evidence="2">
    <location>
        <position position="182"/>
    </location>
    <ligand>
        <name>heme b</name>
        <dbReference type="ChEBI" id="CHEBI:60344"/>
        <label>b562</label>
    </ligand>
    <ligandPart>
        <name>Fe</name>
        <dbReference type="ChEBI" id="CHEBI:18248"/>
    </ligandPart>
</feature>
<feature type="binding site" description="axial binding residue" evidence="2">
    <location>
        <position position="196"/>
    </location>
    <ligand>
        <name>heme b</name>
        <dbReference type="ChEBI" id="CHEBI:60344"/>
        <label>b566</label>
    </ligand>
    <ligandPart>
        <name>Fe</name>
        <dbReference type="ChEBI" id="CHEBI:18248"/>
    </ligandPart>
</feature>
<feature type="binding site" evidence="2">
    <location>
        <position position="201"/>
    </location>
    <ligand>
        <name>a ubiquinone</name>
        <dbReference type="ChEBI" id="CHEBI:16389"/>
    </ligand>
</feature>
<dbReference type="EMBL" id="AY292718">
    <property type="protein sequence ID" value="AAS54914.1"/>
    <property type="molecule type" value="Genomic_DNA"/>
</dbReference>
<dbReference type="SMR" id="Q6ELW6"/>
<dbReference type="GO" id="GO:0005743">
    <property type="term" value="C:mitochondrial inner membrane"/>
    <property type="evidence" value="ECO:0007669"/>
    <property type="project" value="UniProtKB-SubCell"/>
</dbReference>
<dbReference type="GO" id="GO:0045275">
    <property type="term" value="C:respiratory chain complex III"/>
    <property type="evidence" value="ECO:0007669"/>
    <property type="project" value="InterPro"/>
</dbReference>
<dbReference type="GO" id="GO:0046872">
    <property type="term" value="F:metal ion binding"/>
    <property type="evidence" value="ECO:0007669"/>
    <property type="project" value="UniProtKB-KW"/>
</dbReference>
<dbReference type="GO" id="GO:0008121">
    <property type="term" value="F:ubiquinol-cytochrome-c reductase activity"/>
    <property type="evidence" value="ECO:0007669"/>
    <property type="project" value="InterPro"/>
</dbReference>
<dbReference type="GO" id="GO:0006122">
    <property type="term" value="P:mitochondrial electron transport, ubiquinol to cytochrome c"/>
    <property type="evidence" value="ECO:0007669"/>
    <property type="project" value="TreeGrafter"/>
</dbReference>
<dbReference type="CDD" id="cd00290">
    <property type="entry name" value="cytochrome_b_C"/>
    <property type="match status" value="1"/>
</dbReference>
<dbReference type="CDD" id="cd00284">
    <property type="entry name" value="Cytochrome_b_N"/>
    <property type="match status" value="1"/>
</dbReference>
<dbReference type="FunFam" id="1.20.810.10:FF:000002">
    <property type="entry name" value="Cytochrome b"/>
    <property type="match status" value="1"/>
</dbReference>
<dbReference type="Gene3D" id="1.20.810.10">
    <property type="entry name" value="Cytochrome Bc1 Complex, Chain C"/>
    <property type="match status" value="1"/>
</dbReference>
<dbReference type="InterPro" id="IPR005798">
    <property type="entry name" value="Cyt_b/b6_C"/>
</dbReference>
<dbReference type="InterPro" id="IPR036150">
    <property type="entry name" value="Cyt_b/b6_C_sf"/>
</dbReference>
<dbReference type="InterPro" id="IPR005797">
    <property type="entry name" value="Cyt_b/b6_N"/>
</dbReference>
<dbReference type="InterPro" id="IPR027387">
    <property type="entry name" value="Cytb/b6-like_sf"/>
</dbReference>
<dbReference type="InterPro" id="IPR030689">
    <property type="entry name" value="Cytochrome_b"/>
</dbReference>
<dbReference type="InterPro" id="IPR048260">
    <property type="entry name" value="Cytochrome_b_C_euk/bac"/>
</dbReference>
<dbReference type="InterPro" id="IPR048259">
    <property type="entry name" value="Cytochrome_b_N_euk/bac"/>
</dbReference>
<dbReference type="InterPro" id="IPR016174">
    <property type="entry name" value="Di-haem_cyt_TM"/>
</dbReference>
<dbReference type="PANTHER" id="PTHR19271">
    <property type="entry name" value="CYTOCHROME B"/>
    <property type="match status" value="1"/>
</dbReference>
<dbReference type="PANTHER" id="PTHR19271:SF16">
    <property type="entry name" value="CYTOCHROME B"/>
    <property type="match status" value="1"/>
</dbReference>
<dbReference type="Pfam" id="PF00032">
    <property type="entry name" value="Cytochrom_B_C"/>
    <property type="match status" value="1"/>
</dbReference>
<dbReference type="Pfam" id="PF00033">
    <property type="entry name" value="Cytochrome_B"/>
    <property type="match status" value="1"/>
</dbReference>
<dbReference type="PIRSF" id="PIRSF038885">
    <property type="entry name" value="COB"/>
    <property type="match status" value="1"/>
</dbReference>
<dbReference type="SUPFAM" id="SSF81648">
    <property type="entry name" value="a domain/subunit of cytochrome bc1 complex (Ubiquinol-cytochrome c reductase)"/>
    <property type="match status" value="1"/>
</dbReference>
<dbReference type="SUPFAM" id="SSF81342">
    <property type="entry name" value="Transmembrane di-heme cytochromes"/>
    <property type="match status" value="1"/>
</dbReference>
<dbReference type="PROSITE" id="PS51003">
    <property type="entry name" value="CYTB_CTER"/>
    <property type="match status" value="1"/>
</dbReference>
<dbReference type="PROSITE" id="PS51002">
    <property type="entry name" value="CYTB_NTER"/>
    <property type="match status" value="1"/>
</dbReference>
<name>CYB_BUNMO</name>
<sequence>MTNIRKTHPLLKIINHSLIDLPAPSNISAWWNFGSLLGLCLMIQILTGLFLAMHYTSDTTTAFSSVTHICRDVNYGWLIRYLHANGASMFFICLYMHVGRGIYYGSYTYLETWNIGIILLFAVMATAFMGYVLPWGQMSFWGATVITNLLSAIPYIGTTLVEWIWGGFSVDKATLTRFFAFHFILPFIIAALVMVHLLFLHETGSNNPSGIPSDSDKIPFHPYYTIKDALGFIMMILLLLLLVLFSPDLLGDPDNYTPANPLNTPPHIKPEWYFLFAYAILRSIPNKLGGVLALVMSILILAIIPFLHTSKQRSMMFRPLSQILFWILVADLLTLTWIGGQPVEHPFITIGQVASILYFSIILVLMPLASLIENKILKW</sequence>